<reference key="1">
    <citation type="journal article" date="2000" name="DNA Res.">
        <title>Prediction of the coding sequences of unidentified human genes. XVIII. The complete sequences of 100 new cDNA clones from brain which code for large proteins in vitro.</title>
        <authorList>
            <person name="Nagase T."/>
            <person name="Kikuno R."/>
            <person name="Nakayama M."/>
            <person name="Hirosawa M."/>
            <person name="Ohara O."/>
        </authorList>
    </citation>
    <scope>NUCLEOTIDE SEQUENCE [LARGE SCALE MRNA] (ISOFORM 4)</scope>
    <scope>VARIANT GLN-289</scope>
    <source>
        <tissue>Brain</tissue>
    </source>
</reference>
<reference key="2">
    <citation type="submission" date="2005-01" db="EMBL/GenBank/DDBJ databases">
        <authorList>
            <person name="Ohara O."/>
            <person name="Nagase T."/>
            <person name="Kikuno R."/>
        </authorList>
    </citation>
    <scope>SEQUENCE REVISION</scope>
</reference>
<reference key="3">
    <citation type="submission" date="2001-11" db="EMBL/GenBank/DDBJ databases">
        <authorList>
            <person name="Guo J.H."/>
            <person name="Zan Q."/>
            <person name="Yu L."/>
        </authorList>
    </citation>
    <scope>NUCLEOTIDE SEQUENCE [LARGE SCALE MRNA] (ISOFORM 1)</scope>
</reference>
<reference key="4">
    <citation type="journal article" date="2007" name="BMC Genomics">
        <title>The full-ORF clone resource of the German cDNA consortium.</title>
        <authorList>
            <person name="Bechtel S."/>
            <person name="Rosenfelder H."/>
            <person name="Duda A."/>
            <person name="Schmidt C.P."/>
            <person name="Ernst U."/>
            <person name="Wellenreuther R."/>
            <person name="Mehrle A."/>
            <person name="Schuster C."/>
            <person name="Bahr A."/>
            <person name="Bloecker H."/>
            <person name="Heubner D."/>
            <person name="Hoerlein A."/>
            <person name="Michel G."/>
            <person name="Wedler H."/>
            <person name="Koehrer K."/>
            <person name="Ottenwaelder B."/>
            <person name="Poustka A."/>
            <person name="Wiemann S."/>
            <person name="Schupp I."/>
        </authorList>
    </citation>
    <scope>NUCLEOTIDE SEQUENCE [LARGE SCALE MRNA] (ISOFORM 4)</scope>
    <scope>NUCLEOTIDE SEQUENCE [LARGE SCALE MRNA] OF 575-1893 (ISOFORM 2)</scope>
    <scope>VARIANTS GLN-289 AND LEU-1540</scope>
    <source>
        <tissue>Amygdala</tissue>
        <tissue>Retina</tissue>
        <tissue>Testis</tissue>
    </source>
</reference>
<reference key="5">
    <citation type="journal article" date="2004" name="Nature">
        <title>DNA sequence and analysis of human chromosome 9.</title>
        <authorList>
            <person name="Humphray S.J."/>
            <person name="Oliver K."/>
            <person name="Hunt A.R."/>
            <person name="Plumb R.W."/>
            <person name="Loveland J.E."/>
            <person name="Howe K.L."/>
            <person name="Andrews T.D."/>
            <person name="Searle S."/>
            <person name="Hunt S.E."/>
            <person name="Scott C.E."/>
            <person name="Jones M.C."/>
            <person name="Ainscough R."/>
            <person name="Almeida J.P."/>
            <person name="Ambrose K.D."/>
            <person name="Ashwell R.I.S."/>
            <person name="Babbage A.K."/>
            <person name="Babbage S."/>
            <person name="Bagguley C.L."/>
            <person name="Bailey J."/>
            <person name="Banerjee R."/>
            <person name="Barker D.J."/>
            <person name="Barlow K.F."/>
            <person name="Bates K."/>
            <person name="Beasley H."/>
            <person name="Beasley O."/>
            <person name="Bird C.P."/>
            <person name="Bray-Allen S."/>
            <person name="Brown A.J."/>
            <person name="Brown J.Y."/>
            <person name="Burford D."/>
            <person name="Burrill W."/>
            <person name="Burton J."/>
            <person name="Carder C."/>
            <person name="Carter N.P."/>
            <person name="Chapman J.C."/>
            <person name="Chen Y."/>
            <person name="Clarke G."/>
            <person name="Clark S.Y."/>
            <person name="Clee C.M."/>
            <person name="Clegg S."/>
            <person name="Collier R.E."/>
            <person name="Corby N."/>
            <person name="Crosier M."/>
            <person name="Cummings A.T."/>
            <person name="Davies J."/>
            <person name="Dhami P."/>
            <person name="Dunn M."/>
            <person name="Dutta I."/>
            <person name="Dyer L.W."/>
            <person name="Earthrowl M.E."/>
            <person name="Faulkner L."/>
            <person name="Fleming C.J."/>
            <person name="Frankish A."/>
            <person name="Frankland J.A."/>
            <person name="French L."/>
            <person name="Fricker D.G."/>
            <person name="Garner P."/>
            <person name="Garnett J."/>
            <person name="Ghori J."/>
            <person name="Gilbert J.G.R."/>
            <person name="Glison C."/>
            <person name="Grafham D.V."/>
            <person name="Gribble S."/>
            <person name="Griffiths C."/>
            <person name="Griffiths-Jones S."/>
            <person name="Grocock R."/>
            <person name="Guy J."/>
            <person name="Hall R.E."/>
            <person name="Hammond S."/>
            <person name="Harley J.L."/>
            <person name="Harrison E.S.I."/>
            <person name="Hart E.A."/>
            <person name="Heath P.D."/>
            <person name="Henderson C.D."/>
            <person name="Hopkins B.L."/>
            <person name="Howard P.J."/>
            <person name="Howden P.J."/>
            <person name="Huckle E."/>
            <person name="Johnson C."/>
            <person name="Johnson D."/>
            <person name="Joy A.A."/>
            <person name="Kay M."/>
            <person name="Keenan S."/>
            <person name="Kershaw J.K."/>
            <person name="Kimberley A.M."/>
            <person name="King A."/>
            <person name="Knights A."/>
            <person name="Laird G.K."/>
            <person name="Langford C."/>
            <person name="Lawlor S."/>
            <person name="Leongamornlert D.A."/>
            <person name="Leversha M."/>
            <person name="Lloyd C."/>
            <person name="Lloyd D.M."/>
            <person name="Lovell J."/>
            <person name="Martin S."/>
            <person name="Mashreghi-Mohammadi M."/>
            <person name="Matthews L."/>
            <person name="McLaren S."/>
            <person name="McLay K.E."/>
            <person name="McMurray A."/>
            <person name="Milne S."/>
            <person name="Nickerson T."/>
            <person name="Nisbett J."/>
            <person name="Nordsiek G."/>
            <person name="Pearce A.V."/>
            <person name="Peck A.I."/>
            <person name="Porter K.M."/>
            <person name="Pandian R."/>
            <person name="Pelan S."/>
            <person name="Phillimore B."/>
            <person name="Povey S."/>
            <person name="Ramsey Y."/>
            <person name="Rand V."/>
            <person name="Scharfe M."/>
            <person name="Sehra H.K."/>
            <person name="Shownkeen R."/>
            <person name="Sims S.K."/>
            <person name="Skuce C.D."/>
            <person name="Smith M."/>
            <person name="Steward C.A."/>
            <person name="Swarbreck D."/>
            <person name="Sycamore N."/>
            <person name="Tester J."/>
            <person name="Thorpe A."/>
            <person name="Tracey A."/>
            <person name="Tromans A."/>
            <person name="Thomas D.W."/>
            <person name="Wall M."/>
            <person name="Wallis J.M."/>
            <person name="West A.P."/>
            <person name="Whitehead S.L."/>
            <person name="Willey D.L."/>
            <person name="Williams S.A."/>
            <person name="Wilming L."/>
            <person name="Wray P.W."/>
            <person name="Young L."/>
            <person name="Ashurst J.L."/>
            <person name="Coulson A."/>
            <person name="Blocker H."/>
            <person name="Durbin R.M."/>
            <person name="Sulston J.E."/>
            <person name="Hubbard T."/>
            <person name="Jackson M.J."/>
            <person name="Bentley D.R."/>
            <person name="Beck S."/>
            <person name="Rogers J."/>
            <person name="Dunham I."/>
        </authorList>
    </citation>
    <scope>NUCLEOTIDE SEQUENCE [LARGE SCALE GENOMIC DNA]</scope>
</reference>
<reference key="6">
    <citation type="journal article" date="2004" name="Nat. Genet.">
        <title>Complete sequencing and characterization of 21,243 full-length human cDNAs.</title>
        <authorList>
            <person name="Ota T."/>
            <person name="Suzuki Y."/>
            <person name="Nishikawa T."/>
            <person name="Otsuki T."/>
            <person name="Sugiyama T."/>
            <person name="Irie R."/>
            <person name="Wakamatsu A."/>
            <person name="Hayashi K."/>
            <person name="Sato H."/>
            <person name="Nagai K."/>
            <person name="Kimura K."/>
            <person name="Makita H."/>
            <person name="Sekine M."/>
            <person name="Obayashi M."/>
            <person name="Nishi T."/>
            <person name="Shibahara T."/>
            <person name="Tanaka T."/>
            <person name="Ishii S."/>
            <person name="Yamamoto J."/>
            <person name="Saito K."/>
            <person name="Kawai Y."/>
            <person name="Isono Y."/>
            <person name="Nakamura Y."/>
            <person name="Nagahari K."/>
            <person name="Murakami K."/>
            <person name="Yasuda T."/>
            <person name="Iwayanagi T."/>
            <person name="Wagatsuma M."/>
            <person name="Shiratori A."/>
            <person name="Sudo H."/>
            <person name="Hosoiri T."/>
            <person name="Kaku Y."/>
            <person name="Kodaira H."/>
            <person name="Kondo H."/>
            <person name="Sugawara M."/>
            <person name="Takahashi M."/>
            <person name="Kanda K."/>
            <person name="Yokoi T."/>
            <person name="Furuya T."/>
            <person name="Kikkawa E."/>
            <person name="Omura Y."/>
            <person name="Abe K."/>
            <person name="Kamihara K."/>
            <person name="Katsuta N."/>
            <person name="Sato K."/>
            <person name="Tanikawa M."/>
            <person name="Yamazaki M."/>
            <person name="Ninomiya K."/>
            <person name="Ishibashi T."/>
            <person name="Yamashita H."/>
            <person name="Murakawa K."/>
            <person name="Fujimori K."/>
            <person name="Tanai H."/>
            <person name="Kimata M."/>
            <person name="Watanabe M."/>
            <person name="Hiraoka S."/>
            <person name="Chiba Y."/>
            <person name="Ishida S."/>
            <person name="Ono Y."/>
            <person name="Takiguchi S."/>
            <person name="Watanabe S."/>
            <person name="Yosida M."/>
            <person name="Hotuta T."/>
            <person name="Kusano J."/>
            <person name="Kanehori K."/>
            <person name="Takahashi-Fujii A."/>
            <person name="Hara H."/>
            <person name="Tanase T.-O."/>
            <person name="Nomura Y."/>
            <person name="Togiya S."/>
            <person name="Komai F."/>
            <person name="Hara R."/>
            <person name="Takeuchi K."/>
            <person name="Arita M."/>
            <person name="Imose N."/>
            <person name="Musashino K."/>
            <person name="Yuuki H."/>
            <person name="Oshima A."/>
            <person name="Sasaki N."/>
            <person name="Aotsuka S."/>
            <person name="Yoshikawa Y."/>
            <person name="Matsunawa H."/>
            <person name="Ichihara T."/>
            <person name="Shiohata N."/>
            <person name="Sano S."/>
            <person name="Moriya S."/>
            <person name="Momiyama H."/>
            <person name="Satoh N."/>
            <person name="Takami S."/>
            <person name="Terashima Y."/>
            <person name="Suzuki O."/>
            <person name="Nakagawa S."/>
            <person name="Senoh A."/>
            <person name="Mizoguchi H."/>
            <person name="Goto Y."/>
            <person name="Shimizu F."/>
            <person name="Wakebe H."/>
            <person name="Hishigaki H."/>
            <person name="Watanabe T."/>
            <person name="Sugiyama A."/>
            <person name="Takemoto M."/>
            <person name="Kawakami B."/>
            <person name="Yamazaki M."/>
            <person name="Watanabe K."/>
            <person name="Kumagai A."/>
            <person name="Itakura S."/>
            <person name="Fukuzumi Y."/>
            <person name="Fujimori Y."/>
            <person name="Komiyama M."/>
            <person name="Tashiro H."/>
            <person name="Tanigami A."/>
            <person name="Fujiwara T."/>
            <person name="Ono T."/>
            <person name="Yamada K."/>
            <person name="Fujii Y."/>
            <person name="Ozaki K."/>
            <person name="Hirao M."/>
            <person name="Ohmori Y."/>
            <person name="Kawabata A."/>
            <person name="Hikiji T."/>
            <person name="Kobatake N."/>
            <person name="Inagaki H."/>
            <person name="Ikema Y."/>
            <person name="Okamoto S."/>
            <person name="Okitani R."/>
            <person name="Kawakami T."/>
            <person name="Noguchi S."/>
            <person name="Itoh T."/>
            <person name="Shigeta K."/>
            <person name="Senba T."/>
            <person name="Matsumura K."/>
            <person name="Nakajima Y."/>
            <person name="Mizuno T."/>
            <person name="Morinaga M."/>
            <person name="Sasaki M."/>
            <person name="Togashi T."/>
            <person name="Oyama M."/>
            <person name="Hata H."/>
            <person name="Watanabe M."/>
            <person name="Komatsu T."/>
            <person name="Mizushima-Sugano J."/>
            <person name="Satoh T."/>
            <person name="Shirai Y."/>
            <person name="Takahashi Y."/>
            <person name="Nakagawa K."/>
            <person name="Okumura K."/>
            <person name="Nagase T."/>
            <person name="Nomura N."/>
            <person name="Kikuchi H."/>
            <person name="Masuho Y."/>
            <person name="Yamashita R."/>
            <person name="Nakai K."/>
            <person name="Yada T."/>
            <person name="Nakamura Y."/>
            <person name="Ohara O."/>
            <person name="Isogai T."/>
            <person name="Sugano S."/>
        </authorList>
    </citation>
    <scope>NUCLEOTIDE SEQUENCE [LARGE SCALE MRNA] OF 950-1893 (ISOFORM 3)</scope>
    <scope>NUCLEOTIDE SEQUENCE [LARGE SCALE MRNA] OF 1576-1654 (ISOFORM 4)</scope>
    <scope>VARIANT LEU-1540</scope>
    <source>
        <tissue>Kidney</tissue>
        <tissue>Teratocarcinoma</tissue>
    </source>
</reference>
<reference key="7">
    <citation type="journal article" date="2004" name="Genome Res.">
        <title>The status, quality, and expansion of the NIH full-length cDNA project: the Mammalian Gene Collection (MGC).</title>
        <authorList>
            <consortium name="The MGC Project Team"/>
        </authorList>
    </citation>
    <scope>NUCLEOTIDE SEQUENCE [LARGE SCALE MRNA] OF 1401-1893</scope>
    <source>
        <tissue>Lung</tissue>
    </source>
</reference>
<reference key="8">
    <citation type="journal article" date="2000" name="Gene">
        <title>Cloning of three novel neuronal Cdk5 activator binding proteins.</title>
        <authorList>
            <person name="Ching Y.-P."/>
            <person name="Qi Z."/>
            <person name="Wang J.H."/>
        </authorList>
    </citation>
    <scope>TISSUE SPECIFICITY</scope>
</reference>
<reference key="9">
    <citation type="journal article" date="2003" name="Nature">
        <title>Proteomic characterization of the human centrosome by protein correlation profiling.</title>
        <authorList>
            <person name="Andersen J.S."/>
            <person name="Wilkinson C.J."/>
            <person name="Mayor T."/>
            <person name="Mortensen P."/>
            <person name="Nigg E.A."/>
            <person name="Mann M."/>
        </authorList>
    </citation>
    <scope>IDENTIFICATION BY MASS SPECTROMETRY</scope>
    <scope>SUBCELLULAR LOCATION [LARGE SCALE ANALYSIS]</scope>
    <source>
        <tissue>Lymphoblast</tissue>
    </source>
</reference>
<reference key="10">
    <citation type="journal article" date="2007" name="J. Cell Sci.">
        <title>Cep68 and Cep215 (Cdk5rap2) are required for centrosome cohesion.</title>
        <authorList>
            <person name="Graser S."/>
            <person name="Stierhof Y.D."/>
            <person name="Nigg E.A."/>
        </authorList>
    </citation>
    <scope>FUNCTION</scope>
    <scope>SUBCELLULAR LOCATION</scope>
</reference>
<reference key="11">
    <citation type="journal article" date="2008" name="Mol. Biol. Cell">
        <title>CDK5RAP2 is a pericentriolar protein that functions in centrosomal attachment of the gamma-tubulin ring complex.</title>
        <authorList>
            <person name="Fong K.W."/>
            <person name="Choi Y.K."/>
            <person name="Rattner J.B."/>
            <person name="Qi R.Z."/>
        </authorList>
    </citation>
    <scope>FUNCTION</scope>
    <scope>SUBCELLULAR LOCATION</scope>
    <scope>INTERACTION WITH TUBG1 AND TUBGCP3</scope>
</reference>
<reference key="12">
    <citation type="journal article" date="2008" name="Proc. Natl. Acad. Sci. U.S.A.">
        <title>A quantitative atlas of mitotic phosphorylation.</title>
        <authorList>
            <person name="Dephoure N."/>
            <person name="Zhou C."/>
            <person name="Villen J."/>
            <person name="Beausoleil S.A."/>
            <person name="Bakalarski C.E."/>
            <person name="Elledge S.J."/>
            <person name="Gygi S.P."/>
        </authorList>
    </citation>
    <scope>PHOSPHORYLATION [LARGE SCALE ANALYSIS] AT SER-1238 AND SER-1893</scope>
    <scope>IDENTIFICATION BY MASS SPECTROMETRY [LARGE SCALE ANALYSIS]</scope>
    <source>
        <tissue>Cervix carcinoma</tissue>
    </source>
</reference>
<reference key="13">
    <citation type="journal article" date="2009" name="Cell Cycle">
        <title>CDK5RAP2 is required for spindle checkpoint function.</title>
        <authorList>
            <person name="Zhang X."/>
            <person name="Liu D."/>
            <person name="Lv S."/>
            <person name="Wang H."/>
            <person name="Zhong X."/>
            <person name="Liu B."/>
            <person name="Wang B."/>
            <person name="Liao J."/>
            <person name="Li J."/>
            <person name="Pfeifer G.P."/>
            <person name="Xu X."/>
        </authorList>
    </citation>
    <scope>FUNCTION</scope>
    <scope>SUBCELLULAR LOCATION</scope>
    <scope>INTERACTION WITH CDC20</scope>
</reference>
<reference key="14">
    <citation type="journal article" date="2009" name="Mol. Biol. Cell">
        <title>Interaction of CDK5RAP2 with EB1 to track growing microtubule tips and to regulate microtubule dynamics.</title>
        <authorList>
            <person name="Fong K.W."/>
            <person name="Hau S.Y."/>
            <person name="Kho Y.S."/>
            <person name="Jia Y."/>
            <person name="He L."/>
            <person name="Qi R.Z."/>
        </authorList>
    </citation>
    <scope>FUNCTION</scope>
    <scope>INTERACTION WITH MAPRE1</scope>
    <scope>SUBCELLULAR LOCATION</scope>
    <scope>MUTAGENESIS OF 938-LEU-PRO-939</scope>
</reference>
<reference key="15">
    <citation type="journal article" date="2009" name="PLoS ONE">
        <title>Plk1-dependent recruitment of gamma-tubulin complexes to mitotic centrosomes involves multiple PCM components.</title>
        <authorList>
            <person name="Haren L."/>
            <person name="Stearns T."/>
            <person name="Lueders J."/>
        </authorList>
    </citation>
    <scope>SUBCELLULAR LOCATION</scope>
</reference>
<reference key="16">
    <citation type="journal article" date="2009" name="Sci. Signal.">
        <title>Quantitative phosphoproteomic analysis of T cell receptor signaling reveals system-wide modulation of protein-protein interactions.</title>
        <authorList>
            <person name="Mayya V."/>
            <person name="Lundgren D.H."/>
            <person name="Hwang S.-I."/>
            <person name="Rezaul K."/>
            <person name="Wu L."/>
            <person name="Eng J.K."/>
            <person name="Rodionov V."/>
            <person name="Han D.K."/>
        </authorList>
    </citation>
    <scope>PHOSPHORYLATION [LARGE SCALE ANALYSIS] AT SER-1238</scope>
    <scope>IDENTIFICATION BY MASS SPECTROMETRY [LARGE SCALE ANALYSIS]</scope>
    <source>
        <tissue>Leukemic T-cell</tissue>
    </source>
</reference>
<reference key="17">
    <citation type="journal article" date="2010" name="J. Biol. Chem.">
        <title>Conserved motif of CDK5RAP2 mediates its localization to centrosomes and the Golgi complex.</title>
        <authorList>
            <person name="Wang Z."/>
            <person name="Wu T."/>
            <person name="Shi L."/>
            <person name="Zhang L."/>
            <person name="Zheng W."/>
            <person name="Qu J.Y."/>
            <person name="Niu R."/>
            <person name="Qi R.Z."/>
        </authorList>
    </citation>
    <scope>SUBCELLULAR LOCATION</scope>
    <scope>INTERACTION WITH AKAP9; CALM1 AND PCNT</scope>
    <scope>MUTAGENESIS OF LYS-1865 AND LYS-1869</scope>
</reference>
<reference key="18">
    <citation type="journal article" date="2010" name="Sci. Signal.">
        <title>Quantitative phosphoproteomics reveals widespread full phosphorylation site occupancy during mitosis.</title>
        <authorList>
            <person name="Olsen J.V."/>
            <person name="Vermeulen M."/>
            <person name="Santamaria A."/>
            <person name="Kumar C."/>
            <person name="Miller M.L."/>
            <person name="Jensen L.J."/>
            <person name="Gnad F."/>
            <person name="Cox J."/>
            <person name="Jensen T.S."/>
            <person name="Nigg E.A."/>
            <person name="Brunak S."/>
            <person name="Mann M."/>
        </authorList>
    </citation>
    <scope>PHOSPHORYLATION [LARGE SCALE ANALYSIS] AT SER-547 AND THR-1001</scope>
    <scope>IDENTIFICATION BY MASS SPECTROMETRY [LARGE SCALE ANALYSIS]</scope>
    <source>
        <tissue>Cervix carcinoma</tissue>
    </source>
</reference>
<reference key="19">
    <citation type="journal article" date="2011" name="BMC Syst. Biol.">
        <title>Initial characterization of the human central proteome.</title>
        <authorList>
            <person name="Burkard T.R."/>
            <person name="Planyavsky M."/>
            <person name="Kaupe I."/>
            <person name="Breitwieser F.P."/>
            <person name="Buerckstuemmer T."/>
            <person name="Bennett K.L."/>
            <person name="Superti-Furga G."/>
            <person name="Colinge J."/>
        </authorList>
    </citation>
    <scope>IDENTIFICATION BY MASS SPECTROMETRY [LARGE SCALE ANALYSIS]</scope>
</reference>
<reference key="20">
    <citation type="journal article" date="2013" name="J. Proteome Res.">
        <title>Toward a comprehensive characterization of a human cancer cell phosphoproteome.</title>
        <authorList>
            <person name="Zhou H."/>
            <person name="Di Palma S."/>
            <person name="Preisinger C."/>
            <person name="Peng M."/>
            <person name="Polat A.N."/>
            <person name="Heck A.J."/>
            <person name="Mohammed S."/>
        </authorList>
    </citation>
    <scope>PHOSPHORYLATION [LARGE SCALE ANALYSIS] AT SER-547; SER-1238 AND SER-1490</scope>
    <scope>IDENTIFICATION BY MASS SPECTROMETRY [LARGE SCALE ANALYSIS]</scope>
    <source>
        <tissue>Cervix carcinoma</tissue>
        <tissue>Erythroleukemia</tissue>
    </source>
</reference>
<reference key="21">
    <citation type="journal article" date="2015" name="Mol. Biol. Cell">
        <title>CENP-32 is required to maintain centrosomal dominance in bipolar spindle assembly.</title>
        <authorList>
            <person name="Ohta S."/>
            <person name="Wood L."/>
            <person name="Toramoto I."/>
            <person name="Yagyu K."/>
            <person name="Fukagawa T."/>
            <person name="Earnshaw W.C."/>
        </authorList>
    </citation>
    <scope>SUBCELLULAR LOCATION</scope>
</reference>
<reference key="22">
    <citation type="journal article" date="2015" name="Nat. Cell Biol.">
        <title>Degradation of Cep68 and PCNT cleavage mediate Cep215 removal from the PCM to allow centriole separation, disengagement and licensing.</title>
        <authorList>
            <person name="Pagan J.K."/>
            <person name="Marzio A."/>
            <person name="Jones M.J."/>
            <person name="Saraf A."/>
            <person name="Jallepalli P.V."/>
            <person name="Florens L."/>
            <person name="Washburn M.P."/>
            <person name="Pagano M."/>
        </authorList>
    </citation>
    <scope>INTERACTION WITH CEP68</scope>
    <scope>SUBCELLULAR LOCATION</scope>
</reference>
<reference key="23">
    <citation type="journal article" date="2015" name="Biochem. Biophys. Res. Commun.">
        <title>Microtubule-bundling activity of the centrosomal protein, Cep169, and its binding to microtubules.</title>
        <authorList>
            <person name="Mori Y."/>
            <person name="Taniyama Y."/>
            <person name="Tanaka S."/>
            <person name="Fukuchi H."/>
            <person name="Terada Y."/>
        </authorList>
    </citation>
    <scope>SUBCELLULAR LOCATION</scope>
</reference>
<reference key="24">
    <citation type="journal article" date="2015" name="PLoS ONE">
        <title>Cep169, a novel microtubule plus-end-tracking centrosomal protein, binds to CDK5RAP2 and regulates microtubule stability.</title>
        <authorList>
            <person name="Mori Y."/>
            <person name="Inoue Y."/>
            <person name="Tanaka S."/>
            <person name="Doda S."/>
            <person name="Yamanaka S."/>
            <person name="Fukuchi H."/>
            <person name="Terada Y."/>
        </authorList>
    </citation>
    <scope>FUNCTION</scope>
    <scope>SUBCELLULAR LOCATION</scope>
    <scope>INTERACTION WITH NCKAP5L</scope>
</reference>
<reference key="25">
    <citation type="journal article" date="2017" name="Proc. Natl. Acad. Sci. U.S.A.">
        <title>EB1-binding-myomegalin protein complex promotes centrosomal microtubules functions.</title>
        <authorList>
            <person name="Bouguenina H."/>
            <person name="Salaun D."/>
            <person name="Mangon A."/>
            <person name="Muller L."/>
            <person name="Baudelet E."/>
            <person name="Camoin L."/>
            <person name="Tachibana T."/>
            <person name="Cianferani S."/>
            <person name="Audebert S."/>
            <person name="Verdier-Pinard P."/>
            <person name="Badache A."/>
        </authorList>
    </citation>
    <scope>FUNCTION</scope>
    <scope>INTERACTION WITH AKAP9; LGALS3BP; MAPRE1 AND PDE4DIP</scope>
    <scope>SUBCELLULAR LOCATION</scope>
</reference>
<reference key="26">
    <citation type="journal article" date="2020" name="J. Cell Sci.">
        <title>Cep44 functions in centrosome cohesion by stabilizing rootletin.</title>
        <authorList>
            <person name="Hossain D."/>
            <person name="Shih S.Y."/>
            <person name="Xiao X."/>
            <person name="White J."/>
            <person name="Tsang W.Y."/>
        </authorList>
    </citation>
    <scope>SUBCELLULAR LOCATION</scope>
</reference>
<reference key="27">
    <citation type="journal article" date="2022" name="PLoS Biol.">
        <title>The ciliopathy protein CCDC66 controls mitotic progression and cytokinesis by promoting microtubule nucleation and organization.</title>
        <authorList>
            <person name="Batman U."/>
            <person name="Deretic J."/>
            <person name="Firat-Karalar E.N."/>
        </authorList>
    </citation>
    <scope>SUBCELLULAR LOCATION</scope>
    <scope>INTERACTION WITH CCDC66</scope>
</reference>
<reference key="28">
    <citation type="journal article" date="2005" name="Nat. Genet.">
        <title>A centrosomal mechanism involving CDK5RAP2 and CENPJ controls brain size.</title>
        <authorList>
            <person name="Bond J."/>
            <person name="Roberts E."/>
            <person name="Springell K."/>
            <person name="Lizarraga S.B."/>
            <person name="Scott S."/>
            <person name="Higgins J."/>
            <person name="Hampshire D.J."/>
            <person name="Morrison E.E."/>
            <person name="Leal G.F."/>
            <person name="Silva E.O."/>
            <person name="Costa S.M.R."/>
            <person name="Baralle D."/>
            <person name="Raponi M."/>
            <person name="Karbani G."/>
            <person name="Rashid Y."/>
            <person name="Jafri H."/>
            <person name="Bennett C."/>
            <person name="Corry P."/>
            <person name="Walsh C.A."/>
            <person name="Woods C.G."/>
        </authorList>
    </citation>
    <scope>INVOLVEMENT IN MCPH3</scope>
</reference>
<reference key="29">
    <citation type="journal article" date="2005" name="Nat. Genet.">
        <authorList>
            <person name="Bond J."/>
            <person name="Roberts E."/>
            <person name="Springell K."/>
            <person name="Lizarraga S.B."/>
            <person name="Scott S."/>
            <person name="Higgins J."/>
            <person name="Hampshire D.J."/>
            <person name="Morrison E.E."/>
            <person name="Leal G.F."/>
            <person name="Silva E.O."/>
            <person name="Costa S.M.R."/>
            <person name="Baralle D."/>
            <person name="Raponi M."/>
            <person name="Karbani G."/>
            <person name="Rashid Y."/>
            <person name="Jafri H."/>
            <person name="Bennett C."/>
            <person name="Corry P."/>
            <person name="Walsh C.A."/>
            <person name="Woods C.G."/>
        </authorList>
    </citation>
    <scope>ERRATUM OF PUBMED:15793586</scope>
</reference>
<reference evidence="29" key="30">
    <citation type="journal article" date="2024" name="Dev. Cell">
        <title>CDK5RAP2 activates microtubule nucleator gammaTuRC by facilitating template formation and actin release.</title>
        <authorList>
            <person name="Serna M."/>
            <person name="Zimmermann F."/>
            <person name="Vineethakumari C."/>
            <person name="Gonzalez-Rodriguez N."/>
            <person name="Llorca O."/>
            <person name="Luders J."/>
        </authorList>
    </citation>
    <scope>STRUCTURE BY ELECTRON MICROSCOPY (3.57 ANGSTROMS) OF 51-94 IN COMPLEX WITH MZT1; MZT2A; ACTB AND THE GAMMA-TUBULIN RING COMPLEX</scope>
    <scope>FUNCTION</scope>
    <scope>SUBUNIT</scope>
</reference>
<dbReference type="EMBL" id="AB046853">
    <property type="protein sequence ID" value="BAB13459.2"/>
    <property type="status" value="ALT_INIT"/>
    <property type="molecule type" value="mRNA"/>
</dbReference>
<dbReference type="EMBL" id="AF448860">
    <property type="protein sequence ID" value="AAP41926.1"/>
    <property type="molecule type" value="mRNA"/>
</dbReference>
<dbReference type="EMBL" id="AL133161">
    <property type="protein sequence ID" value="CAB61487.1"/>
    <property type="molecule type" value="mRNA"/>
</dbReference>
<dbReference type="EMBL" id="BX537421">
    <property type="protein sequence ID" value="CAD97663.1"/>
    <property type="status" value="ALT_SEQ"/>
    <property type="molecule type" value="mRNA"/>
</dbReference>
<dbReference type="EMBL" id="BX537759">
    <property type="protein sequence ID" value="CAD97828.1"/>
    <property type="status" value="ALT_FRAME"/>
    <property type="molecule type" value="mRNA"/>
</dbReference>
<dbReference type="EMBL" id="AL138836">
    <property type="status" value="NOT_ANNOTATED_CDS"/>
    <property type="molecule type" value="Genomic_DNA"/>
</dbReference>
<dbReference type="EMBL" id="AL353736">
    <property type="status" value="NOT_ANNOTATED_CDS"/>
    <property type="molecule type" value="Genomic_DNA"/>
</dbReference>
<dbReference type="EMBL" id="AL391870">
    <property type="status" value="NOT_ANNOTATED_CDS"/>
    <property type="molecule type" value="Genomic_DNA"/>
</dbReference>
<dbReference type="EMBL" id="AL590642">
    <property type="status" value="NOT_ANNOTATED_CDS"/>
    <property type="molecule type" value="Genomic_DNA"/>
</dbReference>
<dbReference type="EMBL" id="AK001729">
    <property type="protein sequence ID" value="BAA91865.1"/>
    <property type="status" value="ALT_INIT"/>
    <property type="molecule type" value="mRNA"/>
</dbReference>
<dbReference type="EMBL" id="AK025867">
    <property type="protein sequence ID" value="BAB15263.1"/>
    <property type="status" value="ALT_INIT"/>
    <property type="molecule type" value="mRNA"/>
</dbReference>
<dbReference type="EMBL" id="AK027636">
    <property type="protein sequence ID" value="BAB55253.1"/>
    <property type="status" value="ALT_INIT"/>
    <property type="molecule type" value="mRNA"/>
</dbReference>
<dbReference type="EMBL" id="BC004526">
    <property type="protein sequence ID" value="AAH04526.2"/>
    <property type="status" value="ALT_INIT"/>
    <property type="molecule type" value="mRNA"/>
</dbReference>
<dbReference type="CCDS" id="CCDS43871.1">
    <molecule id="Q96SN8-4"/>
</dbReference>
<dbReference type="CCDS" id="CCDS6823.1">
    <molecule id="Q96SN8-1"/>
</dbReference>
<dbReference type="CCDS" id="CCDS94470.1">
    <molecule id="Q96SN8-2"/>
</dbReference>
<dbReference type="PIR" id="T42658">
    <property type="entry name" value="T42658"/>
</dbReference>
<dbReference type="RefSeq" id="NP_001011649.1">
    <molecule id="Q96SN8-4"/>
    <property type="nucleotide sequence ID" value="NM_001011649.3"/>
</dbReference>
<dbReference type="RefSeq" id="NP_001258968.1">
    <property type="nucleotide sequence ID" value="NM_001272039.1"/>
</dbReference>
<dbReference type="RefSeq" id="NP_001397922.1">
    <molecule id="Q96SN8-2"/>
    <property type="nucleotide sequence ID" value="NM_001410993.1"/>
</dbReference>
<dbReference type="RefSeq" id="NP_060719.4">
    <molecule id="Q96SN8-1"/>
    <property type="nucleotide sequence ID" value="NM_018249.5"/>
</dbReference>
<dbReference type="RefSeq" id="XP_006717245.1">
    <property type="nucleotide sequence ID" value="XM_006717182.1"/>
</dbReference>
<dbReference type="PDB" id="6X0V">
    <property type="method" value="EM"/>
    <property type="resolution" value="4.50 A"/>
    <property type="chains" value="G/H=1-1893"/>
</dbReference>
<dbReference type="PDB" id="8RX1">
    <property type="method" value="EM"/>
    <property type="resolution" value="3.57 A"/>
    <property type="chains" value="G/H/g/h/i/j/s/t/u/v=51-94"/>
</dbReference>
<dbReference type="PDB" id="9G40">
    <property type="method" value="EM"/>
    <property type="resolution" value="4.30 A"/>
    <property type="chains" value="u/v=1-1893"/>
</dbReference>
<dbReference type="PDB" id="9H9P">
    <property type="method" value="EM"/>
    <property type="resolution" value="4.50 A"/>
    <property type="chains" value="A/G=1-1893"/>
</dbReference>
<dbReference type="PDBsum" id="6X0V"/>
<dbReference type="PDBsum" id="8RX1"/>
<dbReference type="PDBsum" id="9G40"/>
<dbReference type="PDBsum" id="9H9P"/>
<dbReference type="EMDB" id="EMD-51020"/>
<dbReference type="SMR" id="Q96SN8"/>
<dbReference type="BioGRID" id="120873">
    <property type="interactions" value="200"/>
</dbReference>
<dbReference type="CORUM" id="Q96SN8"/>
<dbReference type="DIP" id="DIP-31632N"/>
<dbReference type="FunCoup" id="Q96SN8">
    <property type="interactions" value="2168"/>
</dbReference>
<dbReference type="IntAct" id="Q96SN8">
    <property type="interactions" value="221"/>
</dbReference>
<dbReference type="MINT" id="Q96SN8"/>
<dbReference type="STRING" id="9606.ENSP00000343818"/>
<dbReference type="GlyGen" id="Q96SN8">
    <property type="glycosylation" value="3 sites, 1 O-linked glycan (1 site)"/>
</dbReference>
<dbReference type="iPTMnet" id="Q96SN8"/>
<dbReference type="MetOSite" id="Q96SN8"/>
<dbReference type="PhosphoSitePlus" id="Q96SN8"/>
<dbReference type="SwissPalm" id="Q96SN8"/>
<dbReference type="BioMuta" id="CDK5RAP2"/>
<dbReference type="DMDM" id="296439505"/>
<dbReference type="jPOST" id="Q96SN8"/>
<dbReference type="MassIVE" id="Q96SN8"/>
<dbReference type="PaxDb" id="9606-ENSP00000343818"/>
<dbReference type="PeptideAtlas" id="Q96SN8"/>
<dbReference type="ProteomicsDB" id="78131">
    <molecule id="Q96SN8-1"/>
</dbReference>
<dbReference type="ProteomicsDB" id="78132">
    <molecule id="Q96SN8-2"/>
</dbReference>
<dbReference type="ProteomicsDB" id="78133">
    <molecule id="Q96SN8-3"/>
</dbReference>
<dbReference type="ProteomicsDB" id="78134">
    <molecule id="Q96SN8-4"/>
</dbReference>
<dbReference type="Pumba" id="Q96SN8"/>
<dbReference type="Antibodypedia" id="30055">
    <property type="antibodies" value="138 antibodies from 25 providers"/>
</dbReference>
<dbReference type="DNASU" id="55755"/>
<dbReference type="Ensembl" id="ENST00000349780.9">
    <molecule id="Q96SN8-1"/>
    <property type="protein sequence ID" value="ENSP00000343818.4"/>
    <property type="gene ID" value="ENSG00000136861.19"/>
</dbReference>
<dbReference type="Ensembl" id="ENST00000360190.8">
    <molecule id="Q96SN8-4"/>
    <property type="protein sequence ID" value="ENSP00000353317.4"/>
    <property type="gene ID" value="ENSG00000136861.19"/>
</dbReference>
<dbReference type="Ensembl" id="ENST00000416449.6">
    <molecule id="Q96SN8-2"/>
    <property type="protein sequence ID" value="ENSP00000400395.2"/>
    <property type="gene ID" value="ENSG00000136861.19"/>
</dbReference>
<dbReference type="GeneID" id="55755"/>
<dbReference type="KEGG" id="hsa:55755"/>
<dbReference type="MANE-Select" id="ENST00000349780.9">
    <property type="protein sequence ID" value="ENSP00000343818.4"/>
    <property type="RefSeq nucleotide sequence ID" value="NM_018249.6"/>
    <property type="RefSeq protein sequence ID" value="NP_060719.4"/>
</dbReference>
<dbReference type="UCSC" id="uc004bkf.5">
    <molecule id="Q96SN8-1"/>
    <property type="organism name" value="human"/>
</dbReference>
<dbReference type="AGR" id="HGNC:18672"/>
<dbReference type="CTD" id="55755"/>
<dbReference type="DisGeNET" id="55755"/>
<dbReference type="GeneCards" id="CDK5RAP2"/>
<dbReference type="HGNC" id="HGNC:18672">
    <property type="gene designation" value="CDK5RAP2"/>
</dbReference>
<dbReference type="HPA" id="ENSG00000136861">
    <property type="expression patterns" value="Low tissue specificity"/>
</dbReference>
<dbReference type="MalaCards" id="CDK5RAP2"/>
<dbReference type="MIM" id="604804">
    <property type="type" value="phenotype"/>
</dbReference>
<dbReference type="MIM" id="608201">
    <property type="type" value="gene"/>
</dbReference>
<dbReference type="neXtProt" id="NX_Q96SN8"/>
<dbReference type="OpenTargets" id="ENSG00000136861"/>
<dbReference type="Orphanet" id="2512">
    <property type="disease" value="Autosomal recessive primary microcephaly"/>
</dbReference>
<dbReference type="PharmGKB" id="PA38632"/>
<dbReference type="VEuPathDB" id="HostDB:ENSG00000136861"/>
<dbReference type="eggNOG" id="ENOG502QTI7">
    <property type="taxonomic scope" value="Eukaryota"/>
</dbReference>
<dbReference type="GeneTree" id="ENSGT00950000183190"/>
<dbReference type="InParanoid" id="Q96SN8"/>
<dbReference type="OMA" id="CGQIGEM"/>
<dbReference type="OrthoDB" id="10255000at2759"/>
<dbReference type="PAN-GO" id="Q96SN8">
    <property type="GO annotations" value="17 GO annotations based on evolutionary models"/>
</dbReference>
<dbReference type="PhylomeDB" id="Q96SN8"/>
<dbReference type="TreeFam" id="TF329233"/>
<dbReference type="PathwayCommons" id="Q96SN8"/>
<dbReference type="Reactome" id="R-HSA-2565942">
    <property type="pathway name" value="Regulation of PLK1 Activity at G2/M Transition"/>
</dbReference>
<dbReference type="Reactome" id="R-HSA-380259">
    <property type="pathway name" value="Loss of Nlp from mitotic centrosomes"/>
</dbReference>
<dbReference type="Reactome" id="R-HSA-380270">
    <property type="pathway name" value="Recruitment of mitotic centrosome proteins and complexes"/>
</dbReference>
<dbReference type="Reactome" id="R-HSA-380284">
    <property type="pathway name" value="Loss of proteins required for interphase microtubule organization from the centrosome"/>
</dbReference>
<dbReference type="Reactome" id="R-HSA-380320">
    <property type="pathway name" value="Recruitment of NuMA to mitotic centrosomes"/>
</dbReference>
<dbReference type="Reactome" id="R-HSA-5620912">
    <property type="pathway name" value="Anchoring of the basal body to the plasma membrane"/>
</dbReference>
<dbReference type="Reactome" id="R-HSA-8854518">
    <property type="pathway name" value="AURKA Activation by TPX2"/>
</dbReference>
<dbReference type="SignaLink" id="Q96SN8"/>
<dbReference type="SIGNOR" id="Q96SN8"/>
<dbReference type="BioGRID-ORCS" id="55755">
    <property type="hits" value="36 hits in 1169 CRISPR screens"/>
</dbReference>
<dbReference type="CD-CODE" id="8C2F96ED">
    <property type="entry name" value="Centrosome"/>
</dbReference>
<dbReference type="ChiTaRS" id="CDK5RAP2">
    <property type="organism name" value="human"/>
</dbReference>
<dbReference type="GeneWiki" id="CDK5RAP2"/>
<dbReference type="GenomeRNAi" id="55755"/>
<dbReference type="Pharos" id="Q96SN8">
    <property type="development level" value="Tbio"/>
</dbReference>
<dbReference type="PRO" id="PR:Q96SN8"/>
<dbReference type="Proteomes" id="UP000005640">
    <property type="component" value="Chromosome 9"/>
</dbReference>
<dbReference type="RNAct" id="Q96SN8">
    <property type="molecule type" value="protein"/>
</dbReference>
<dbReference type="Bgee" id="ENSG00000136861">
    <property type="expression patterns" value="Expressed in sural nerve and 193 other cell types or tissues"/>
</dbReference>
<dbReference type="ExpressionAtlas" id="Q96SN8">
    <property type="expression patterns" value="baseline and differential"/>
</dbReference>
<dbReference type="GO" id="GO:0030054">
    <property type="term" value="C:cell junction"/>
    <property type="evidence" value="ECO:0000314"/>
    <property type="project" value="HPA"/>
</dbReference>
<dbReference type="GO" id="GO:0005813">
    <property type="term" value="C:centrosome"/>
    <property type="evidence" value="ECO:0000314"/>
    <property type="project" value="HPA"/>
</dbReference>
<dbReference type="GO" id="GO:0036064">
    <property type="term" value="C:ciliary basal body"/>
    <property type="evidence" value="ECO:0000314"/>
    <property type="project" value="HPA"/>
</dbReference>
<dbReference type="GO" id="GO:0005737">
    <property type="term" value="C:cytoplasm"/>
    <property type="evidence" value="ECO:0000314"/>
    <property type="project" value="UniProtKB"/>
</dbReference>
<dbReference type="GO" id="GO:0005856">
    <property type="term" value="C:cytoskeleton"/>
    <property type="evidence" value="ECO:0000303"/>
    <property type="project" value="UniProtKB"/>
</dbReference>
<dbReference type="GO" id="GO:0005829">
    <property type="term" value="C:cytosol"/>
    <property type="evidence" value="ECO:0000314"/>
    <property type="project" value="HPA"/>
</dbReference>
<dbReference type="GO" id="GO:0070062">
    <property type="term" value="C:extracellular exosome"/>
    <property type="evidence" value="ECO:0007005"/>
    <property type="project" value="UniProtKB"/>
</dbReference>
<dbReference type="GO" id="GO:0005794">
    <property type="term" value="C:Golgi apparatus"/>
    <property type="evidence" value="ECO:0000314"/>
    <property type="project" value="HPA"/>
</dbReference>
<dbReference type="GO" id="GO:0005874">
    <property type="term" value="C:microtubule"/>
    <property type="evidence" value="ECO:0000314"/>
    <property type="project" value="UniProtKB"/>
</dbReference>
<dbReference type="GO" id="GO:0035371">
    <property type="term" value="C:microtubule plus-end"/>
    <property type="evidence" value="ECO:0000314"/>
    <property type="project" value="UniProtKB"/>
</dbReference>
<dbReference type="GO" id="GO:0097431">
    <property type="term" value="C:mitotic spindle pole"/>
    <property type="evidence" value="ECO:0000318"/>
    <property type="project" value="GO_Central"/>
</dbReference>
<dbReference type="GO" id="GO:0000242">
    <property type="term" value="C:pericentriolar material"/>
    <property type="evidence" value="ECO:0000314"/>
    <property type="project" value="UniProtKB"/>
</dbReference>
<dbReference type="GO" id="GO:0048471">
    <property type="term" value="C:perinuclear region of cytoplasm"/>
    <property type="evidence" value="ECO:0000314"/>
    <property type="project" value="UniProtKB"/>
</dbReference>
<dbReference type="GO" id="GO:0000922">
    <property type="term" value="C:spindle pole"/>
    <property type="evidence" value="ECO:0000314"/>
    <property type="project" value="UniProtKB"/>
</dbReference>
<dbReference type="GO" id="GO:0005516">
    <property type="term" value="F:calmodulin binding"/>
    <property type="evidence" value="ECO:0000314"/>
    <property type="project" value="UniProtKB"/>
</dbReference>
<dbReference type="GO" id="GO:0043015">
    <property type="term" value="F:gamma-tubulin binding"/>
    <property type="evidence" value="ECO:0000314"/>
    <property type="project" value="UniProtKB"/>
</dbReference>
<dbReference type="GO" id="GO:0008017">
    <property type="term" value="F:microtubule binding"/>
    <property type="evidence" value="ECO:0000314"/>
    <property type="project" value="UniProtKB"/>
</dbReference>
<dbReference type="GO" id="GO:0019901">
    <property type="term" value="F:protein kinase binding"/>
    <property type="evidence" value="ECO:0000353"/>
    <property type="project" value="UniProtKB"/>
</dbReference>
<dbReference type="GO" id="GO:0044877">
    <property type="term" value="F:protein-containing complex binding"/>
    <property type="evidence" value="ECO:0007669"/>
    <property type="project" value="Ensembl"/>
</dbReference>
<dbReference type="GO" id="GO:0000976">
    <property type="term" value="F:transcription cis-regulatory region binding"/>
    <property type="evidence" value="ECO:0000314"/>
    <property type="project" value="UniProtKB"/>
</dbReference>
<dbReference type="GO" id="GO:0015631">
    <property type="term" value="F:tubulin binding"/>
    <property type="evidence" value="ECO:0000353"/>
    <property type="project" value="UniProtKB"/>
</dbReference>
<dbReference type="GO" id="GO:0007420">
    <property type="term" value="P:brain development"/>
    <property type="evidence" value="ECO:0000250"/>
    <property type="project" value="UniProtKB"/>
</dbReference>
<dbReference type="GO" id="GO:0007099">
    <property type="term" value="P:centriole replication"/>
    <property type="evidence" value="ECO:0000315"/>
    <property type="project" value="UniProtKB"/>
</dbReference>
<dbReference type="GO" id="GO:0007098">
    <property type="term" value="P:centrosome cycle"/>
    <property type="evidence" value="ECO:0000315"/>
    <property type="project" value="UniProtKB"/>
</dbReference>
<dbReference type="GO" id="GO:0007059">
    <property type="term" value="P:chromosome segregation"/>
    <property type="evidence" value="ECO:0000315"/>
    <property type="project" value="UniProtKB"/>
</dbReference>
<dbReference type="GO" id="GO:0000132">
    <property type="term" value="P:establishment of mitotic spindle orientation"/>
    <property type="evidence" value="ECO:0000250"/>
    <property type="project" value="UniProtKB"/>
</dbReference>
<dbReference type="GO" id="GO:0001578">
    <property type="term" value="P:microtubule bundle formation"/>
    <property type="evidence" value="ECO:0000314"/>
    <property type="project" value="UniProtKB"/>
</dbReference>
<dbReference type="GO" id="GO:0000226">
    <property type="term" value="P:microtubule cytoskeleton organization"/>
    <property type="evidence" value="ECO:0000314"/>
    <property type="project" value="UniProtKB"/>
</dbReference>
<dbReference type="GO" id="GO:0031023">
    <property type="term" value="P:microtubule organizing center organization"/>
    <property type="evidence" value="ECO:0000315"/>
    <property type="project" value="UniProtKB"/>
</dbReference>
<dbReference type="GO" id="GO:0046600">
    <property type="term" value="P:negative regulation of centriole replication"/>
    <property type="evidence" value="ECO:0000250"/>
    <property type="project" value="UniProtKB"/>
</dbReference>
<dbReference type="GO" id="GO:0045665">
    <property type="term" value="P:negative regulation of neuron differentiation"/>
    <property type="evidence" value="ECO:0007669"/>
    <property type="project" value="Ensembl"/>
</dbReference>
<dbReference type="GO" id="GO:0022008">
    <property type="term" value="P:neurogenesis"/>
    <property type="evidence" value="ECO:0000250"/>
    <property type="project" value="UniProtKB"/>
</dbReference>
<dbReference type="GO" id="GO:0045893">
    <property type="term" value="P:positive regulation of DNA-templated transcription"/>
    <property type="evidence" value="ECO:0000314"/>
    <property type="project" value="UniProtKB"/>
</dbReference>
<dbReference type="GO" id="GO:0031116">
    <property type="term" value="P:positive regulation of microtubule polymerization"/>
    <property type="evidence" value="ECO:0000315"/>
    <property type="project" value="UniProtKB"/>
</dbReference>
<dbReference type="GO" id="GO:0090266">
    <property type="term" value="P:regulation of mitotic cell cycle spindle assembly checkpoint"/>
    <property type="evidence" value="ECO:0000314"/>
    <property type="project" value="UniProtKB"/>
</dbReference>
<dbReference type="GO" id="GO:0045664">
    <property type="term" value="P:regulation of neuron differentiation"/>
    <property type="evidence" value="ECO:0000303"/>
    <property type="project" value="UniProtKB"/>
</dbReference>
<dbReference type="InterPro" id="IPR056273">
    <property type="entry name" value="CC_CDK5RAP2_MYOME"/>
</dbReference>
<dbReference type="InterPro" id="IPR042791">
    <property type="entry name" value="CDK5RAP2"/>
</dbReference>
<dbReference type="InterPro" id="IPR012943">
    <property type="entry name" value="Cnn_1N"/>
</dbReference>
<dbReference type="PANTHER" id="PTHR46930">
    <property type="entry name" value="CDK5 REGULATORY SUBUNIT-ASSOCIATED PROTEIN 2"/>
    <property type="match status" value="1"/>
</dbReference>
<dbReference type="PANTHER" id="PTHR46930:SF1">
    <property type="entry name" value="CDK5 REGULATORY SUBUNIT-ASSOCIATED PROTEIN 2"/>
    <property type="match status" value="1"/>
</dbReference>
<dbReference type="Pfam" id="PF23246">
    <property type="entry name" value="CC_CDK5RAP2"/>
    <property type="match status" value="1"/>
</dbReference>
<dbReference type="Pfam" id="PF07989">
    <property type="entry name" value="Cnn_1N"/>
    <property type="match status" value="1"/>
</dbReference>
<feature type="chain" id="PRO_0000089835" description="CDK5 regulatory subunit-associated protein 2">
    <location>
        <begin position="1"/>
        <end position="1893"/>
    </location>
</feature>
<feature type="region of interest" description="CM1 motif; interacts with the gTuRC" evidence="24">
    <location>
        <begin position="51"/>
        <end position="94"/>
    </location>
</feature>
<feature type="region of interest" description="Interaction with NCKAP5L" evidence="20">
    <location>
        <begin position="58"/>
        <end position="196"/>
    </location>
</feature>
<feature type="region of interest" description="Interaction with MAPRE1" evidence="15">
    <location>
        <begin position="926"/>
        <end position="1208"/>
    </location>
</feature>
<feature type="region of interest" description="Disordered" evidence="4">
    <location>
        <begin position="1015"/>
        <end position="1071"/>
    </location>
</feature>
<feature type="region of interest" description="Disordered" evidence="4">
    <location>
        <begin position="1084"/>
        <end position="1105"/>
    </location>
</feature>
<feature type="region of interest" description="Disordered" evidence="4">
    <location>
        <begin position="1347"/>
        <end position="1381"/>
    </location>
</feature>
<feature type="region of interest" description="Disordered" evidence="4">
    <location>
        <begin position="1500"/>
        <end position="1521"/>
    </location>
</feature>
<feature type="region of interest" description="Disordered" evidence="4">
    <location>
        <begin position="1646"/>
        <end position="1706"/>
    </location>
</feature>
<feature type="region of interest" description="Interaction with PCNT and AKAP9" evidence="16">
    <location>
        <begin position="1726"/>
        <end position="1893"/>
    </location>
</feature>
<feature type="region of interest" description="Interaction with CDK5R1" evidence="1">
    <location>
        <begin position="1726"/>
        <end position="1768"/>
    </location>
</feature>
<feature type="region of interest" description="Disordered" evidence="4">
    <location>
        <begin position="1754"/>
        <end position="1774"/>
    </location>
</feature>
<feature type="region of interest" description="Required for centrosomal attachment, Golgi localization and CALM1 interaction">
    <location>
        <begin position="1861"/>
        <end position="1870"/>
    </location>
</feature>
<feature type="compositionally biased region" description="Basic and acidic residues" evidence="4">
    <location>
        <begin position="1034"/>
        <end position="1048"/>
    </location>
</feature>
<feature type="compositionally biased region" description="Basic and acidic residues" evidence="4">
    <location>
        <begin position="1364"/>
        <end position="1381"/>
    </location>
</feature>
<feature type="compositionally biased region" description="Basic and acidic residues" evidence="4">
    <location>
        <begin position="1500"/>
        <end position="1519"/>
    </location>
</feature>
<feature type="compositionally biased region" description="Basic and acidic residues" evidence="4">
    <location>
        <begin position="1651"/>
        <end position="1661"/>
    </location>
</feature>
<feature type="compositionally biased region" description="Polar residues" evidence="4">
    <location>
        <begin position="1663"/>
        <end position="1706"/>
    </location>
</feature>
<feature type="compositionally biased region" description="Polar residues" evidence="4">
    <location>
        <begin position="1754"/>
        <end position="1766"/>
    </location>
</feature>
<feature type="modified residue" description="Phosphoserine" evidence="32 33">
    <location>
        <position position="547"/>
    </location>
</feature>
<feature type="modified residue" description="Phosphothreonine" evidence="32">
    <location>
        <position position="1001"/>
    </location>
</feature>
<feature type="modified residue" description="Phosphoserine" evidence="30 31 33">
    <location>
        <position position="1238"/>
    </location>
</feature>
<feature type="modified residue" description="Phosphoserine" evidence="33">
    <location>
        <position position="1490"/>
    </location>
</feature>
<feature type="modified residue" description="Phosphoserine" evidence="3">
    <location>
        <position position="1663"/>
    </location>
</feature>
<feature type="modified residue" description="Phosphoserine" evidence="3">
    <location>
        <position position="1666"/>
    </location>
</feature>
<feature type="modified residue" description="Phosphoserine" evidence="30">
    <location>
        <position position="1893"/>
    </location>
</feature>
<feature type="splice variant" id="VSP_007563" description="In isoform 2." evidence="27">
    <location>
        <begin position="702"/>
        <end position="733"/>
    </location>
</feature>
<feature type="splice variant" id="VSP_007564" description="In isoform 3." evidence="26">
    <location>
        <begin position="1009"/>
        <end position="1049"/>
    </location>
</feature>
<feature type="splice variant" id="VSP_007565" description="In isoform 4." evidence="25 26 27">
    <location>
        <begin position="1576"/>
        <end position="1654"/>
    </location>
</feature>
<feature type="sequence variant" id="VAR_056831" description="In dbSNP:rs13287734.">
    <original>A</original>
    <variation>P</variation>
    <location>
        <position position="183"/>
    </location>
</feature>
<feature type="sequence variant" id="VAR_017443" description="In dbSNP:rs4836822." evidence="6 12">
    <original>E</original>
    <variation>Q</variation>
    <location>
        <position position="289"/>
    </location>
</feature>
<feature type="sequence variant" id="VAR_032426" description="In dbSNP:rs3780679.">
    <original>R</original>
    <variation>T</variation>
    <location>
        <position position="1045"/>
    </location>
</feature>
<feature type="sequence variant" id="VAR_059616" description="In dbSNP:rs7875294.">
    <original>N</original>
    <variation>I</variation>
    <location>
        <position position="1330"/>
    </location>
</feature>
<feature type="sequence variant" id="VAR_017444" description="In dbSNP:rs4837768." evidence="8 12">
    <original>V</original>
    <variation>L</variation>
    <location>
        <position position="1540"/>
    </location>
</feature>
<feature type="sequence variant" id="VAR_056832" description="In dbSNP:rs16909747.">
    <original>R</original>
    <variation>S</variation>
    <location>
        <position position="1607"/>
    </location>
</feature>
<feature type="mutagenesis site" description="Loss of interaction with MAPRE1." evidence="15">
    <original>LP</original>
    <variation>AA</variation>
    <location>
        <begin position="938"/>
        <end position="939"/>
    </location>
</feature>
<feature type="mutagenesis site" description="No effect on centrosomal attachment, Golgi localization and loss of interaction with CALM1; when associated with A-1869." evidence="16">
    <original>K</original>
    <variation>A</variation>
    <location>
        <position position="1865"/>
    </location>
</feature>
<feature type="mutagenesis site" description="No effect on centrosomal attachment, Golgi localization and loss of interaction to CALM1; when associated with A-1865." evidence="16">
    <original>K</original>
    <variation>A</variation>
    <location>
        <position position="1869"/>
    </location>
</feature>
<feature type="sequence conflict" description="In Ref. 4; CAD97663." evidence="28" ref="4">
    <original>P</original>
    <variation>S</variation>
    <location>
        <position position="27"/>
    </location>
</feature>
<feature type="sequence conflict" description="In Ref. 3; AAP41926." evidence="28" ref="3">
    <original>L</original>
    <variation>V</variation>
    <location>
        <position position="43"/>
    </location>
</feature>
<feature type="sequence conflict" description="In Ref. 4; CAD97828." evidence="28" ref="4">
    <original>I</original>
    <variation>F</variation>
    <location>
        <position position="292"/>
    </location>
</feature>
<feature type="sequence conflict" description="In Ref. 4; CAD97828." evidence="28" ref="4">
    <original>E</original>
    <variation>K</variation>
    <location>
        <position position="414"/>
    </location>
</feature>
<feature type="sequence conflict" description="In Ref. 4; CAD97663." evidence="28" ref="4">
    <original>S</original>
    <variation>F</variation>
    <location>
        <position position="1254"/>
    </location>
</feature>
<feature type="sequence conflict" description="In Ref. 6; BAA91865." evidence="28" ref="6">
    <original>Q</original>
    <variation>R</variation>
    <location>
        <position position="1458"/>
    </location>
</feature>
<feature type="sequence conflict" description="In Ref. 4; CAD97663." evidence="28" ref="4">
    <original>S</original>
    <variation>P</variation>
    <location>
        <position position="1483"/>
    </location>
</feature>
<feature type="sequence conflict" description="In Ref. 6; BAB55253." evidence="28" ref="6">
    <original>N</original>
    <variation>D</variation>
    <location>
        <position position="1550"/>
    </location>
</feature>
<feature type="sequence conflict" description="In Ref. 6; BAA91865." evidence="28" ref="6">
    <original>K</original>
    <variation>R</variation>
    <location>
        <position position="1838"/>
    </location>
</feature>
<proteinExistence type="evidence at protein level"/>
<keyword id="KW-0002">3D-structure</keyword>
<keyword id="KW-0025">Alternative splicing</keyword>
<keyword id="KW-0112">Calmodulin-binding</keyword>
<keyword id="KW-0963">Cytoplasm</keyword>
<keyword id="KW-0206">Cytoskeleton</keyword>
<keyword id="KW-0333">Golgi apparatus</keyword>
<keyword id="KW-0991">Intellectual disability</keyword>
<keyword id="KW-0493">Microtubule</keyword>
<keyword id="KW-0597">Phosphoprotein</keyword>
<keyword id="KW-0905">Primary microcephaly</keyword>
<keyword id="KW-1267">Proteomics identification</keyword>
<keyword id="KW-1185">Reference proteome</keyword>
<accession>Q96SN8</accession>
<accession>Q5JV18</accession>
<accession>Q7Z3L4</accession>
<accession>Q7Z3U1</accession>
<accession>Q7Z7I6</accession>
<accession>Q9BSW0</accession>
<accession>Q9H6J6</accession>
<accession>Q9HCD9</accession>
<accession>Q9NV90</accession>
<accession>Q9UIW9</accession>
<name>CK5P2_HUMAN</name>
<sequence length="1893" mass="215038">MMDLVLEEDVTVPGTLSGCSGLVPSVPDDLDGINPNAGLGNGLLPNVSEETVSPTRARNMKDFENQITELKKENFNLKLRIYFLEERMQQEFHGPTEHIYKTNIELKVEVESLKRELQEREQLLIKASKAVESLAEAGGSEIQRVKEDARKKVQQVEDLLTKRILLLEKDVTAAQAELEKAFAGTETEKALRLRLESKLSEMKKMHEGDLAMALVLDEKDRLIEELKLSLKSKEALIQCLKEEKSQMACPDENVSSGELRGLCAAPREEKERETEAAQMEHQKERNSFEERIQALEEDLREKEREIATEKKNSLKRDKAIQGLTMALKSKEKKVEELNSEIEKLSAAFAKAREALQKAQTQEFQGSEDYETALSGKEALSAALRSQNLTKSTENHRLRRSIKKITQELSDLQQERERLEKDLEEAHREKSKGDCTIRDLRNEVEKLRNEVNEREKAMENRYKSLLSESNKKLHNQEQVIKHLTESTNQKDVLLQKFNEKDLEVIQQNCYLMAAEDLELRSEGLITEKCSSQQPPGSKTIFSKEKKQSSDYEELIQVLKKEQDIYTHLVKSLQESDSINNLQAELNKIFALRKQLEQDVLSYQNLRKTLEEQISEIRRREEESFSLYSDQTSYLSICLEENNRFQVEHFSQEELKKKVSDLIQLVKELYTDNQHLKKTIFDLSCMGFQGNGFPDRLASTEQTELLASKEDEDTIKIGEDDEINFLSDQHLQQSNEIMKDLSKGGCKNGYLRHTESKISDCDGAHAPGCLEEGAFINLLAPLFNEKATLLLESRPDLLKVVRELLLGQLFLTEQEVSGEHLDGKTEKTPKQKGELVHFVQTNSFSKPHDELKLSCEAQLVKAGEVPKVGLKDASVQTVATEGDLLRFKHEATREAWEEKPINTALSAEHRPENLHGVPGWQAALLSLPGITNREAKKSRLPILIKPSRSLGNMYRLPATQEVVTQLQSQILELQGELKEFKTCNKQLHQKLILAEAVMEGRPTPDKTLLNAQPPVGAAYQDSPGEQKGIKTTSSVWRDKEMDSDQQRSYEIDSEICPPDDLASLPSCKENPEDVLSPTSVATYLSSKSQPSAKVSVMGTDQSESINTSNETEYLKQKIHDLETELEGYQNFIFQLQKHSQCSEAIITVLCGTEGAQDGLSKPKNGSDGEEMTFSSLHQVRYVKHVKILGPLAPEMIDSRVLENLKQQLEEQEYKLQKEQNLNMQLFSEIHNLQNKFRDLSPPRYDSLVQSQARELSLQRQQIKDGHGICVISRQHMNTMIKAFEELLQASDVDYCVAEGFQEQLNQCAELLEKLEKLFLNGKSVGVEMNTQNELMERIEEDNLTYQHLLPESPEPSASHALSDYETSEKSFFSRDQKQDNETEKTSVMVNSFSQDLLMEHIQEIRTLRKRLEESIKTNEKLRKQLERQGSEFVQGSTSIFASGSELHSSLTSEIHFLRKQNQALNAMLIKGSRDKQKENDKLRESLSRKTVSLEHLQREYASVKEENERLQKEGSEKERHNQQLIQEVRCSGQELSRVQEEVKLRQQLLSQNDKLLQSLRVELKAYEKLDEEHRRLREASGEGWKGQDPFRDLHSLLMEIQALRLQLERSIETSSTLQSRLKEQLARGAEKAQEGALTLAVQAVSIPEVPLQPDKHDGDKYPMESDNSFDLFDSSQAVTPKSVSETPPLSGNDTDSLSCDSGSSATSTPCVSRLVTGHHLWASKNGRHVLGLIEDYEALLKQISQGQRLLAEMDIQTQEAPSSTSQELGTKGPHPAPLSKFVSSVSTAKLTLEEAYRRLKLLWRVSLPEDGQCPLHCEQIGEMKAEVTKLHKKLFEQEKKLQNTMKLLQLSKRQEKVIFDQLVVTHKILRKARGNLELRPGGAHPGTCSPSRPGS</sequence>
<evidence type="ECO:0000250" key="1"/>
<evidence type="ECO:0000250" key="2">
    <source>
        <dbReference type="UniProtKB" id="Q8K389"/>
    </source>
</evidence>
<evidence type="ECO:0000250" key="3">
    <source>
        <dbReference type="UniProtKB" id="Q9JLH5"/>
    </source>
</evidence>
<evidence type="ECO:0000256" key="4">
    <source>
        <dbReference type="SAM" id="MobiDB-lite"/>
    </source>
</evidence>
<evidence type="ECO:0000269" key="5">
    <source>
    </source>
</evidence>
<evidence type="ECO:0000269" key="6">
    <source>
    </source>
</evidence>
<evidence type="ECO:0000269" key="7">
    <source>
    </source>
</evidence>
<evidence type="ECO:0000269" key="8">
    <source>
    </source>
</evidence>
<evidence type="ECO:0000269" key="9">
    <source>
    </source>
</evidence>
<evidence type="ECO:0000269" key="10">
    <source>
    </source>
</evidence>
<evidence type="ECO:0000269" key="11">
    <source>
    </source>
</evidence>
<evidence type="ECO:0000269" key="12">
    <source>
    </source>
</evidence>
<evidence type="ECO:0000269" key="13">
    <source>
    </source>
</evidence>
<evidence type="ECO:0000269" key="14">
    <source>
    </source>
</evidence>
<evidence type="ECO:0000269" key="15">
    <source>
    </source>
</evidence>
<evidence type="ECO:0000269" key="16">
    <source>
    </source>
</evidence>
<evidence type="ECO:0000269" key="17">
    <source>
    </source>
</evidence>
<evidence type="ECO:0000269" key="18">
    <source>
    </source>
</evidence>
<evidence type="ECO:0000269" key="19">
    <source>
    </source>
</evidence>
<evidence type="ECO:0000269" key="20">
    <source>
    </source>
</evidence>
<evidence type="ECO:0000269" key="21">
    <source>
    </source>
</evidence>
<evidence type="ECO:0000269" key="22">
    <source>
    </source>
</evidence>
<evidence type="ECO:0000269" key="23">
    <source>
    </source>
</evidence>
<evidence type="ECO:0000269" key="24">
    <source>
    </source>
</evidence>
<evidence type="ECO:0000303" key="25">
    <source>
    </source>
</evidence>
<evidence type="ECO:0000303" key="26">
    <source>
    </source>
</evidence>
<evidence type="ECO:0000303" key="27">
    <source>
    </source>
</evidence>
<evidence type="ECO:0000305" key="28"/>
<evidence type="ECO:0007744" key="29">
    <source>
        <dbReference type="PDB" id="8RX1"/>
    </source>
</evidence>
<evidence type="ECO:0007744" key="30">
    <source>
    </source>
</evidence>
<evidence type="ECO:0007744" key="31">
    <source>
    </source>
</evidence>
<evidence type="ECO:0007744" key="32">
    <source>
    </source>
</evidence>
<evidence type="ECO:0007744" key="33">
    <source>
    </source>
</evidence>
<protein>
    <recommendedName>
        <fullName>CDK5 regulatory subunit-associated protein 2</fullName>
    </recommendedName>
    <alternativeName>
        <fullName>CDK5 activator-binding protein C48</fullName>
    </alternativeName>
    <alternativeName>
        <fullName>Centrosome-associated protein 215</fullName>
    </alternativeName>
</protein>
<gene>
    <name type="primary">CDK5RAP2</name>
    <name type="synonym">CEP215</name>
    <name type="synonym">KIAA1633</name>
</gene>
<organism>
    <name type="scientific">Homo sapiens</name>
    <name type="common">Human</name>
    <dbReference type="NCBI Taxonomy" id="9606"/>
    <lineage>
        <taxon>Eukaryota</taxon>
        <taxon>Metazoa</taxon>
        <taxon>Chordata</taxon>
        <taxon>Craniata</taxon>
        <taxon>Vertebrata</taxon>
        <taxon>Euteleostomi</taxon>
        <taxon>Mammalia</taxon>
        <taxon>Eutheria</taxon>
        <taxon>Euarchontoglires</taxon>
        <taxon>Primates</taxon>
        <taxon>Haplorrhini</taxon>
        <taxon>Catarrhini</taxon>
        <taxon>Hominidae</taxon>
        <taxon>Homo</taxon>
    </lineage>
</organism>
<comment type="function">
    <text evidence="2 9 11 13 14 15 20 21 24">Potential regulator of CDK5 activity via its interaction with CDK5R1 (PubMed:15164053). Negative regulator of centriole disengagement (licensing) which maintains centriole engagement and cohesion. Involved in regulation of mitotic spindle orientation (By similarity). Plays a role in the spindle checkpoint activation by acting as a transcriptional regulator of both BUBR1 and MAD2 promoter (PubMed:19282672). Together with EB1/MAPRE1, may promote microtubule polymerization, bundle formation, growth and dynamics at the plus ends (PubMed:18042621, PubMed:17959831, PubMed:19553473). Regulates centrosomal maturation by recruitment of the gamma-tubulin ring complex (gTuRC) onto centrosomes (PubMed:18042621, PubMed:17959831, PubMed:26485573, PubMed:39321809). In complex with PDE4DIP isoform 13/MMG8/SMYLE, MAPRE1 and AKAP9, contributes to microtubules nucleation and extension from the centrosome to the cell periphery (PubMed:29162697). Required for the recruitment of AKAP9 to centrosomes (PubMed:29162697). Plays a role in neurogenesis (By similarity).</text>
</comment>
<comment type="subunit">
    <text evidence="3 11 14 15 16 17 20 21 23 24">Homodimer (PubMed:39321809). Interacts with CDK5R1 (p35 form) (By similarity). CDK5RAP1, CDK5RAP2 and CDK5RAP3 show competitive binding to CDK5R1 (By similarity). May form a complex with CDK5R1 and CDK5 (By similarity). Interacts with pericentrin/PCNT; the interaction is leading to centrosomal and Golgi localization of CDK5RAP2 and PCNT (PubMed:20466722). Interacts with AKAP9; the interaction targets CDK5RAP2 and AKAP9 to Golgi apparatus (PubMed:20466722). Interacts with MAPRE1; the interaction is direct and targets CDK5RAP2 and EB1/MAPRE1 to microtubule plus ends (PubMed:19553473). Interacts with TUBG1; the interaction is leading to the centrosomal localization of CDK5RAP2 and TUBG1 (PubMed:17959831). Interacts with TUBGCP3 (PubMed:17959831). Interacts with CALM1 (PubMed:20466722). Interacts with CDC20 (PubMed:19282672). Interacts with CEP68; degradation of CEP68 in early mitosis leads to removal of CDK5RAP2 from the centrosome which promotes centriole disengagement and subsequent centriole separation (PubMed:25503564). Interacts with NCKAP5L (PubMed:26485573). Forms a pericentrosomal complex with AKAP9, MAPRE1 and PDE4DIP isoform 13/MMG8/SMYLE; within this complex, MAPRE1 binding to CDK5RAP2 may be mediated by PDE4DIP (PubMed:29162697). Interacts with LGALS3BP; this interaction may connect the pericentrosomal complex to the gamma-tubulin ring complex (gTuRC) to promote microtubule assembly and acetylation (PubMed:29162697). Interacts with CCDC66 (PubMed:35849559). Associates (via CM1 motif) with TUBGCP2 of the gTuRC; the interaction plays a role in gTuRC activation (PubMed:39321809).</text>
</comment>
<comment type="interaction">
    <interactant intactId="EBI-308374">
        <id>Q96SN8</id>
    </interactant>
    <interactant intactId="EBI-9051024">
        <id>Q76N32</id>
        <label>CEP68</label>
    </interactant>
    <organismsDiffer>false</organismsDiffer>
    <experiments>8</experiments>
</comment>
<comment type="interaction">
    <interactant intactId="EBI-308374">
        <id>Q96SN8</id>
    </interactant>
    <interactant intactId="EBI-739498">
        <id>Q9P209</id>
        <label>CEP72</label>
    </interactant>
    <organismsDiffer>false</organismsDiffer>
    <experiments>3</experiments>
</comment>
<comment type="interaction">
    <interactant intactId="EBI-308374">
        <id>Q96SN8</id>
    </interactant>
    <interactant intactId="EBI-16165296">
        <id>Q38SD2-1</id>
        <label>LRRK1</label>
    </interactant>
    <organismsDiffer>false</organismsDiffer>
    <experiments>2</experiments>
</comment>
<comment type="interaction">
    <interactant intactId="EBI-308374">
        <id>Q96SN8</id>
    </interactant>
    <interactant intactId="EBI-73886">
        <id>Q04206</id>
        <label>RELA</label>
    </interactant>
    <organismsDiffer>false</organismsDiffer>
    <experiments>3</experiments>
</comment>
<comment type="interaction">
    <interactant intactId="EBI-308374">
        <id>Q96SN8</id>
    </interactant>
    <interactant intactId="EBI-413317">
        <id>Q96R06</id>
        <label>SPAG5</label>
    </interactant>
    <organismsDiffer>false</organismsDiffer>
    <experiments>3</experiments>
</comment>
<comment type="subcellular location">
    <subcellularLocation>
        <location evidence="7 15 17 18 19 20 21 22 23">Cytoplasm</location>
        <location evidence="7 15 17 18 19 20 21 22 23">Cytoskeleton</location>
        <location evidence="7 15 17 18 19 20 21 22 23">Microtubule organizing center</location>
        <location evidence="7 15 17 18 19 20 21 22 23">Centrosome</location>
    </subcellularLocation>
    <subcellularLocation>
        <location evidence="16">Golgi apparatus</location>
    </subcellularLocation>
    <subcellularLocation>
        <location evidence="15">Cytoplasm</location>
    </subcellularLocation>
    <subcellularLocation>
        <location evidence="15 20">Cytoplasm</location>
        <location evidence="15 20">Cytoskeleton</location>
    </subcellularLocation>
    <text evidence="15 20 21">Found in the pericentriolar region adhering to the surface of the centrosome and in the region of the centrosomal appendages. Localizes to microtubule plus ends in the presence of EB1/MAPRE1. Localization to centrosomes versus Golgi apparatus may be cell type-dependent. For instance, in SK-BR-3 and HEK293F cells, localizes to centrosomes but not to the Golgi apparatus (PubMed:29162697).</text>
</comment>
<comment type="alternative products">
    <event type="alternative splicing"/>
    <isoform>
        <id>Q96SN8-1</id>
        <name>1</name>
        <sequence type="displayed"/>
    </isoform>
    <isoform>
        <id>Q96SN8-2</id>
        <name>2</name>
        <sequence type="described" ref="VSP_007563"/>
    </isoform>
    <isoform>
        <id>Q96SN8-3</id>
        <name>3</name>
        <sequence type="described" ref="VSP_007564"/>
    </isoform>
    <isoform>
        <id>Q96SN8-4</id>
        <name>4</name>
        <sequence type="described" ref="VSP_007565"/>
    </isoform>
</comment>
<comment type="tissue specificity">
    <text evidence="5">Widely expressed. Expressed in heart, brain, placenta, lung, liver, skeletal muscle, kidney and pancreas.</text>
</comment>
<comment type="PTM">
    <text evidence="3">Phosphorylated in vitro by CDK5.</text>
</comment>
<comment type="disease" evidence="10">
    <disease id="DI-02206">
        <name>Microcephaly 3, primary, autosomal recessive</name>
        <acronym>MCPH3</acronym>
        <description>A disease defined as a head circumference more than 3 standard deviations below the age-related mean. Brain weight is markedly reduced and the cerebral cortex is disproportionately small. Despite this marked reduction in size, the gyral pattern is relatively well preserved, with no major abnormality in cortical architecture. Affected individuals have mild to moderate intellectual disability. Primary microcephaly is further defined by the absence of other syndromic features or significant neurological deficits due to degenerative brain disorder.</description>
        <dbReference type="MIM" id="604804"/>
    </disease>
    <text>The disease is caused by variants affecting the gene represented in this entry.</text>
</comment>
<comment type="sequence caution" evidence="28">
    <conflict type="erroneous initiation">
        <sequence resource="EMBL-CDS" id="AAH04526"/>
    </conflict>
    <text>Truncated N-terminus.</text>
</comment>
<comment type="sequence caution" evidence="28">
    <conflict type="erroneous initiation">
        <sequence resource="EMBL-CDS" id="BAA91865"/>
    </conflict>
    <text>Truncated N-terminus.</text>
</comment>
<comment type="sequence caution" evidence="28">
    <conflict type="erroneous initiation">
        <sequence resource="EMBL-CDS" id="BAB13459"/>
    </conflict>
    <text>Extended N-terminus.</text>
</comment>
<comment type="sequence caution" evidence="28">
    <conflict type="erroneous initiation">
        <sequence resource="EMBL-CDS" id="BAB15263"/>
    </conflict>
    <text>Truncated N-terminus.</text>
</comment>
<comment type="sequence caution" evidence="28">
    <conflict type="erroneous initiation">
        <sequence resource="EMBL-CDS" id="BAB55253"/>
    </conflict>
    <text>Truncated N-terminus.</text>
</comment>
<comment type="sequence caution" evidence="28">
    <conflict type="erroneous termination">
        <sequence resource="EMBL-CDS" id="CAD97663"/>
    </conflict>
    <text>Truncated C-terminus.</text>
</comment>
<comment type="sequence caution" evidence="28">
    <conflict type="frameshift">
        <sequence resource="EMBL-CDS" id="CAD97828"/>
    </conflict>
</comment>